<keyword id="KW-0963">Cytoplasm</keyword>
<keyword id="KW-0251">Elongation factor</keyword>
<keyword id="KW-0342">GTP-binding</keyword>
<keyword id="KW-0378">Hydrolase</keyword>
<keyword id="KW-0460">Magnesium</keyword>
<keyword id="KW-0479">Metal-binding</keyword>
<keyword id="KW-0547">Nucleotide-binding</keyword>
<keyword id="KW-0648">Protein biosynthesis</keyword>
<sequence>MAKAKFERTKPHVNIGTIGHVDHGKTTLTAAITKVLHDKYPELNESRAFDQIDNAPEERQRGITINISHVEYQTEKRHYAHVDAPGHADYIKNMITGAAQMDGAILVVAATDGPMPQTREHVLLARQVGVPYILVALNKADAVDDEELIELVEMEVRELLAAQDFDEDAPVVRVSALKALEGDEKWVKSVEELMDAVDESIPDPVRDTDRPFLMPVEDVFTITGRGTVVTGRVERGVVNVNEEVEIVGIRPGTTKTTVTGVEMFRKLLDQGQAGDNVGLLLRGIKREDVERGQVVVKPGTTTPHTEFDGQVYILSKDEGGRHTPFFNNYRPQFYFRTTDVTGVVTLPEGTEMVMPGDNTDISVKLIQPVAMDEGLRFAIREGGRTVGAGRVTKIHK</sequence>
<feature type="chain" id="PRO_1000015705" description="Elongation factor Tu">
    <location>
        <begin position="1"/>
        <end position="396"/>
    </location>
</feature>
<feature type="domain" description="tr-type G">
    <location>
        <begin position="10"/>
        <end position="205"/>
    </location>
</feature>
<feature type="region of interest" description="G1" evidence="1">
    <location>
        <begin position="19"/>
        <end position="26"/>
    </location>
</feature>
<feature type="region of interest" description="G2" evidence="1">
    <location>
        <begin position="62"/>
        <end position="66"/>
    </location>
</feature>
<feature type="region of interest" description="G3" evidence="1">
    <location>
        <begin position="83"/>
        <end position="86"/>
    </location>
</feature>
<feature type="region of interest" description="G4" evidence="1">
    <location>
        <begin position="138"/>
        <end position="141"/>
    </location>
</feature>
<feature type="region of interest" description="G5" evidence="1">
    <location>
        <begin position="175"/>
        <end position="177"/>
    </location>
</feature>
<feature type="binding site" evidence="2">
    <location>
        <begin position="19"/>
        <end position="26"/>
    </location>
    <ligand>
        <name>GTP</name>
        <dbReference type="ChEBI" id="CHEBI:37565"/>
    </ligand>
</feature>
<feature type="binding site" evidence="2">
    <location>
        <position position="26"/>
    </location>
    <ligand>
        <name>Mg(2+)</name>
        <dbReference type="ChEBI" id="CHEBI:18420"/>
    </ligand>
</feature>
<feature type="binding site" evidence="2">
    <location>
        <begin position="83"/>
        <end position="87"/>
    </location>
    <ligand>
        <name>GTP</name>
        <dbReference type="ChEBI" id="CHEBI:37565"/>
    </ligand>
</feature>
<feature type="binding site" evidence="2">
    <location>
        <begin position="138"/>
        <end position="141"/>
    </location>
    <ligand>
        <name>GTP</name>
        <dbReference type="ChEBI" id="CHEBI:37565"/>
    </ligand>
</feature>
<organism>
    <name type="scientific">Mycobacterium sp. (strain KMS)</name>
    <dbReference type="NCBI Taxonomy" id="189918"/>
    <lineage>
        <taxon>Bacteria</taxon>
        <taxon>Bacillati</taxon>
        <taxon>Actinomycetota</taxon>
        <taxon>Actinomycetes</taxon>
        <taxon>Mycobacteriales</taxon>
        <taxon>Mycobacteriaceae</taxon>
        <taxon>Mycobacterium</taxon>
    </lineage>
</organism>
<evidence type="ECO:0000250" key="1"/>
<evidence type="ECO:0000255" key="2">
    <source>
        <dbReference type="HAMAP-Rule" id="MF_00118"/>
    </source>
</evidence>
<accession>A1UBL1</accession>
<comment type="function">
    <text evidence="2">GTP hydrolase that promotes the GTP-dependent binding of aminoacyl-tRNA to the A-site of ribosomes during protein biosynthesis.</text>
</comment>
<comment type="catalytic activity">
    <reaction evidence="2">
        <text>GTP + H2O = GDP + phosphate + H(+)</text>
        <dbReference type="Rhea" id="RHEA:19669"/>
        <dbReference type="ChEBI" id="CHEBI:15377"/>
        <dbReference type="ChEBI" id="CHEBI:15378"/>
        <dbReference type="ChEBI" id="CHEBI:37565"/>
        <dbReference type="ChEBI" id="CHEBI:43474"/>
        <dbReference type="ChEBI" id="CHEBI:58189"/>
        <dbReference type="EC" id="3.6.5.3"/>
    </reaction>
    <physiologicalReaction direction="left-to-right" evidence="2">
        <dbReference type="Rhea" id="RHEA:19670"/>
    </physiologicalReaction>
</comment>
<comment type="subunit">
    <text evidence="2">Monomer.</text>
</comment>
<comment type="subcellular location">
    <subcellularLocation>
        <location evidence="2">Cytoplasm</location>
    </subcellularLocation>
</comment>
<comment type="similarity">
    <text evidence="2">Belongs to the TRAFAC class translation factor GTPase superfamily. Classic translation factor GTPase family. EF-Tu/EF-1A subfamily.</text>
</comment>
<protein>
    <recommendedName>
        <fullName evidence="2">Elongation factor Tu</fullName>
        <shortName evidence="2">EF-Tu</shortName>
        <ecNumber evidence="2">3.6.5.3</ecNumber>
    </recommendedName>
</protein>
<proteinExistence type="inferred from homology"/>
<name>EFTU_MYCSK</name>
<dbReference type="EC" id="3.6.5.3" evidence="2"/>
<dbReference type="EMBL" id="CP000518">
    <property type="protein sequence ID" value="ABL90219.1"/>
    <property type="molecule type" value="Genomic_DNA"/>
</dbReference>
<dbReference type="SMR" id="A1UBL1"/>
<dbReference type="STRING" id="189918.Mkms_1005"/>
<dbReference type="KEGG" id="mkm:Mkms_1005"/>
<dbReference type="HOGENOM" id="CLU_007265_0_1_11"/>
<dbReference type="OrthoDB" id="9803139at2"/>
<dbReference type="GO" id="GO:0005829">
    <property type="term" value="C:cytosol"/>
    <property type="evidence" value="ECO:0007669"/>
    <property type="project" value="TreeGrafter"/>
</dbReference>
<dbReference type="GO" id="GO:0005525">
    <property type="term" value="F:GTP binding"/>
    <property type="evidence" value="ECO:0007669"/>
    <property type="project" value="UniProtKB-UniRule"/>
</dbReference>
<dbReference type="GO" id="GO:0003924">
    <property type="term" value="F:GTPase activity"/>
    <property type="evidence" value="ECO:0007669"/>
    <property type="project" value="InterPro"/>
</dbReference>
<dbReference type="GO" id="GO:0003746">
    <property type="term" value="F:translation elongation factor activity"/>
    <property type="evidence" value="ECO:0007669"/>
    <property type="project" value="UniProtKB-UniRule"/>
</dbReference>
<dbReference type="CDD" id="cd01884">
    <property type="entry name" value="EF_Tu"/>
    <property type="match status" value="1"/>
</dbReference>
<dbReference type="CDD" id="cd03697">
    <property type="entry name" value="EFTU_II"/>
    <property type="match status" value="1"/>
</dbReference>
<dbReference type="CDD" id="cd03707">
    <property type="entry name" value="EFTU_III"/>
    <property type="match status" value="1"/>
</dbReference>
<dbReference type="FunFam" id="2.40.30.10:FF:000001">
    <property type="entry name" value="Elongation factor Tu"/>
    <property type="match status" value="1"/>
</dbReference>
<dbReference type="FunFam" id="3.40.50.300:FF:000003">
    <property type="entry name" value="Elongation factor Tu"/>
    <property type="match status" value="1"/>
</dbReference>
<dbReference type="Gene3D" id="3.40.50.300">
    <property type="entry name" value="P-loop containing nucleotide triphosphate hydrolases"/>
    <property type="match status" value="1"/>
</dbReference>
<dbReference type="Gene3D" id="2.40.30.10">
    <property type="entry name" value="Translation factors"/>
    <property type="match status" value="2"/>
</dbReference>
<dbReference type="HAMAP" id="MF_00118_B">
    <property type="entry name" value="EF_Tu_B"/>
    <property type="match status" value="1"/>
</dbReference>
<dbReference type="InterPro" id="IPR041709">
    <property type="entry name" value="EF-Tu_GTP-bd"/>
</dbReference>
<dbReference type="InterPro" id="IPR050055">
    <property type="entry name" value="EF-Tu_GTPase"/>
</dbReference>
<dbReference type="InterPro" id="IPR004161">
    <property type="entry name" value="EFTu-like_2"/>
</dbReference>
<dbReference type="InterPro" id="IPR033720">
    <property type="entry name" value="EFTU_2"/>
</dbReference>
<dbReference type="InterPro" id="IPR031157">
    <property type="entry name" value="G_TR_CS"/>
</dbReference>
<dbReference type="InterPro" id="IPR027417">
    <property type="entry name" value="P-loop_NTPase"/>
</dbReference>
<dbReference type="InterPro" id="IPR005225">
    <property type="entry name" value="Small_GTP-bd"/>
</dbReference>
<dbReference type="InterPro" id="IPR000795">
    <property type="entry name" value="T_Tr_GTP-bd_dom"/>
</dbReference>
<dbReference type="InterPro" id="IPR009000">
    <property type="entry name" value="Transl_B-barrel_sf"/>
</dbReference>
<dbReference type="InterPro" id="IPR009001">
    <property type="entry name" value="Transl_elong_EF1A/Init_IF2_C"/>
</dbReference>
<dbReference type="InterPro" id="IPR004541">
    <property type="entry name" value="Transl_elong_EFTu/EF1A_bac/org"/>
</dbReference>
<dbReference type="InterPro" id="IPR004160">
    <property type="entry name" value="Transl_elong_EFTu/EF1A_C"/>
</dbReference>
<dbReference type="NCBIfam" id="TIGR00485">
    <property type="entry name" value="EF-Tu"/>
    <property type="match status" value="1"/>
</dbReference>
<dbReference type="NCBIfam" id="NF000766">
    <property type="entry name" value="PRK00049.1"/>
    <property type="match status" value="1"/>
</dbReference>
<dbReference type="NCBIfam" id="NF009372">
    <property type="entry name" value="PRK12735.1"/>
    <property type="match status" value="1"/>
</dbReference>
<dbReference type="NCBIfam" id="NF009373">
    <property type="entry name" value="PRK12736.1"/>
    <property type="match status" value="1"/>
</dbReference>
<dbReference type="NCBIfam" id="TIGR00231">
    <property type="entry name" value="small_GTP"/>
    <property type="match status" value="1"/>
</dbReference>
<dbReference type="PANTHER" id="PTHR43721:SF22">
    <property type="entry name" value="ELONGATION FACTOR TU, MITOCHONDRIAL"/>
    <property type="match status" value="1"/>
</dbReference>
<dbReference type="PANTHER" id="PTHR43721">
    <property type="entry name" value="ELONGATION FACTOR TU-RELATED"/>
    <property type="match status" value="1"/>
</dbReference>
<dbReference type="Pfam" id="PF00009">
    <property type="entry name" value="GTP_EFTU"/>
    <property type="match status" value="1"/>
</dbReference>
<dbReference type="Pfam" id="PF03144">
    <property type="entry name" value="GTP_EFTU_D2"/>
    <property type="match status" value="1"/>
</dbReference>
<dbReference type="Pfam" id="PF03143">
    <property type="entry name" value="GTP_EFTU_D3"/>
    <property type="match status" value="1"/>
</dbReference>
<dbReference type="PRINTS" id="PR00315">
    <property type="entry name" value="ELONGATNFCT"/>
</dbReference>
<dbReference type="SUPFAM" id="SSF50465">
    <property type="entry name" value="EF-Tu/eEF-1alpha/eIF2-gamma C-terminal domain"/>
    <property type="match status" value="1"/>
</dbReference>
<dbReference type="SUPFAM" id="SSF52540">
    <property type="entry name" value="P-loop containing nucleoside triphosphate hydrolases"/>
    <property type="match status" value="1"/>
</dbReference>
<dbReference type="SUPFAM" id="SSF50447">
    <property type="entry name" value="Translation proteins"/>
    <property type="match status" value="1"/>
</dbReference>
<dbReference type="PROSITE" id="PS00301">
    <property type="entry name" value="G_TR_1"/>
    <property type="match status" value="1"/>
</dbReference>
<dbReference type="PROSITE" id="PS51722">
    <property type="entry name" value="G_TR_2"/>
    <property type="match status" value="1"/>
</dbReference>
<gene>
    <name evidence="2" type="primary">tuf</name>
    <name type="ordered locus">Mkms_1005</name>
</gene>
<reference key="1">
    <citation type="submission" date="2006-12" db="EMBL/GenBank/DDBJ databases">
        <title>Complete sequence of chromosome of Mycobacterium sp. KMS.</title>
        <authorList>
            <consortium name="US DOE Joint Genome Institute"/>
            <person name="Copeland A."/>
            <person name="Lucas S."/>
            <person name="Lapidus A."/>
            <person name="Barry K."/>
            <person name="Detter J.C."/>
            <person name="Glavina del Rio T."/>
            <person name="Hammon N."/>
            <person name="Israni S."/>
            <person name="Dalin E."/>
            <person name="Tice H."/>
            <person name="Pitluck S."/>
            <person name="Kiss H."/>
            <person name="Brettin T."/>
            <person name="Bruce D."/>
            <person name="Han C."/>
            <person name="Tapia R."/>
            <person name="Gilna P."/>
            <person name="Schmutz J."/>
            <person name="Larimer F."/>
            <person name="Land M."/>
            <person name="Hauser L."/>
            <person name="Kyrpides N."/>
            <person name="Mikhailova N."/>
            <person name="Miller C.D."/>
            <person name="Richardson P."/>
        </authorList>
    </citation>
    <scope>NUCLEOTIDE SEQUENCE [LARGE SCALE GENOMIC DNA]</scope>
    <source>
        <strain>KMS</strain>
    </source>
</reference>